<dbReference type="EMBL" id="AJ277029">
    <property type="protein sequence ID" value="CAB98274.1"/>
    <property type="molecule type" value="Genomic_DNA"/>
</dbReference>
<dbReference type="RefSeq" id="NP_062471.1">
    <property type="nucleotide sequence ID" value="NC_002503.2"/>
</dbReference>
<dbReference type="SMR" id="Q9MET2"/>
<dbReference type="GeneID" id="809408"/>
<dbReference type="KEGG" id="pcad:809408"/>
<dbReference type="CTD" id="4509"/>
<dbReference type="OrthoDB" id="9835073at2759"/>
<dbReference type="Proteomes" id="UP000248484">
    <property type="component" value="Mitochondrion MT"/>
</dbReference>
<dbReference type="GO" id="GO:0031966">
    <property type="term" value="C:mitochondrial membrane"/>
    <property type="evidence" value="ECO:0007669"/>
    <property type="project" value="UniProtKB-SubCell"/>
</dbReference>
<dbReference type="GO" id="GO:0045259">
    <property type="term" value="C:proton-transporting ATP synthase complex"/>
    <property type="evidence" value="ECO:0000250"/>
    <property type="project" value="UniProtKB"/>
</dbReference>
<dbReference type="GO" id="GO:0015078">
    <property type="term" value="F:proton transmembrane transporter activity"/>
    <property type="evidence" value="ECO:0007669"/>
    <property type="project" value="InterPro"/>
</dbReference>
<dbReference type="GO" id="GO:0015986">
    <property type="term" value="P:proton motive force-driven ATP synthesis"/>
    <property type="evidence" value="ECO:0007669"/>
    <property type="project" value="InterPro"/>
</dbReference>
<dbReference type="InterPro" id="IPR039017">
    <property type="entry name" value="ATP8_mammal"/>
</dbReference>
<dbReference type="InterPro" id="IPR001421">
    <property type="entry name" value="ATP8_metazoa"/>
</dbReference>
<dbReference type="PANTHER" id="PTHR13722">
    <property type="entry name" value="ATP SYNTHASE PROTEIN 8"/>
    <property type="match status" value="1"/>
</dbReference>
<dbReference type="PANTHER" id="PTHR13722:SF0">
    <property type="entry name" value="ATP SYNTHASE PROTEIN 8"/>
    <property type="match status" value="1"/>
</dbReference>
<dbReference type="Pfam" id="PF00895">
    <property type="entry name" value="ATP-synt_8"/>
    <property type="match status" value="1"/>
</dbReference>
<proteinExistence type="inferred from homology"/>
<name>ATP8_PHYMC</name>
<protein>
    <recommendedName>
        <fullName evidence="1">ATP synthase F(0) complex subunit 8</fullName>
    </recommendedName>
    <alternativeName>
        <fullName>A6L</fullName>
    </alternativeName>
    <alternativeName>
        <fullName>ATP synthase protein 8</fullName>
    </alternativeName>
    <alternativeName>
        <fullName>F-ATPase subunit 8</fullName>
    </alternativeName>
</protein>
<feature type="chain" id="PRO_0000195569" description="ATP synthase F(0) complex subunit 8">
    <location>
        <begin position="1"/>
        <end position="63"/>
    </location>
</feature>
<feature type="transmembrane region" description="Helical" evidence="4">
    <location>
        <begin position="8"/>
        <end position="24"/>
    </location>
</feature>
<feature type="modified residue" description="N6-acetyllysine" evidence="2">
    <location>
        <position position="57"/>
    </location>
</feature>
<gene>
    <name evidence="1" type="primary">MT-ATP8</name>
    <name type="synonym">ATP8</name>
    <name type="synonym">ATPASE8</name>
    <name type="synonym">MTATP8</name>
</gene>
<comment type="function">
    <text evidence="1 3">Subunit 8, of the mitochondrial membrane ATP synthase complex (F(1)F(0) ATP synthase or Complex V) that produces ATP from ADP in the presence of a proton gradient across the membrane which is generated by electron transport complexes of the respiratory chain. ATP synthase complex consist of a soluble F(1) head domain - the catalytic core - and a membrane F(1) domain - the membrane proton channel. These two domains are linked by a central stalk rotating inside the F(1) region and a stationary peripheral stalk. During catalysis, ATP synthesis in the catalytic domain of F(1) is coupled via a rotary mechanism of the central stalk subunits to proton translocation (By similarity). In vivo, can only synthesize ATP although its ATP hydrolase activity can be activated artificially in vitro (By similarity). Part of the complex F(0) domain (By similarity).</text>
</comment>
<comment type="subunit">
    <text evidence="1">Component of the ATP synthase complex composed at least of ATP5F1A/subunit alpha, ATP5F1B/subunit beta, ATP5MC1/subunit c (homooctomer), MT-ATP6/subunit a, MT-ATP8/subunit 8, ATP5ME/subunit e, ATP5MF/subunit f, ATP5MG/subunit g, ATP5MK/subunit k, ATP5MJ/subunit j, ATP5F1C/subunit gamma, ATP5F1D/subunit delta, ATP5F1E/subunit epsilon, ATP5PF/subunit F6, ATP5PB/subunit b, ATP5PD/subunit d, ATP5PO/subunit OSCP. ATP synthase complex consists of a soluble F(1) head domain (subunits alpha(3) and beta(3)) - the catalytic core - and a membrane F(0) domain - the membrane proton channel (subunits c, a, 8, e, f, g, k and j). These two domains are linked by a central stalk (subunits gamma, delta, and epsilon) rotating inside the F1 region and a stationary peripheral stalk (subunits F6, b, d, and OSCP). Interacts with PRICKLE3.</text>
</comment>
<comment type="subcellular location">
    <subcellularLocation>
        <location>Mitochondrion membrane</location>
        <topology>Single-pass membrane protein</topology>
    </subcellularLocation>
</comment>
<comment type="similarity">
    <text evidence="5">Belongs to the ATPase protein 8 family.</text>
</comment>
<keyword id="KW-0007">Acetylation</keyword>
<keyword id="KW-0066">ATP synthesis</keyword>
<keyword id="KW-0138">CF(0)</keyword>
<keyword id="KW-0375">Hydrogen ion transport</keyword>
<keyword id="KW-0406">Ion transport</keyword>
<keyword id="KW-0472">Membrane</keyword>
<keyword id="KW-0496">Mitochondrion</keyword>
<keyword id="KW-1185">Reference proteome</keyword>
<keyword id="KW-0812">Transmembrane</keyword>
<keyword id="KW-1133">Transmembrane helix</keyword>
<keyword id="KW-0813">Transport</keyword>
<accession>Q9MET2</accession>
<sequence>MPQLDTSTWFLTILSVMLTLFTLLQPKISMHLYTPNPKPMPTKTQKQHSPWNTAWTKIYLPLL</sequence>
<organism>
    <name type="scientific">Physeter macrocephalus</name>
    <name type="common">Sperm whale</name>
    <name type="synonym">Physeter catodon</name>
    <dbReference type="NCBI Taxonomy" id="9755"/>
    <lineage>
        <taxon>Eukaryota</taxon>
        <taxon>Metazoa</taxon>
        <taxon>Chordata</taxon>
        <taxon>Craniata</taxon>
        <taxon>Vertebrata</taxon>
        <taxon>Euteleostomi</taxon>
        <taxon>Mammalia</taxon>
        <taxon>Eutheria</taxon>
        <taxon>Laurasiatheria</taxon>
        <taxon>Artiodactyla</taxon>
        <taxon>Whippomorpha</taxon>
        <taxon>Cetacea</taxon>
        <taxon>Odontoceti</taxon>
        <taxon>Physeteridae</taxon>
        <taxon>Physeter</taxon>
    </lineage>
</organism>
<reference key="1">
    <citation type="journal article" date="2000" name="J. Mol. Evol.">
        <title>The mitochondrial genome of the sperm whale and a new molecular reference for estimating eutherian divergence dates.</title>
        <authorList>
            <person name="Arnason U."/>
            <person name="Gullberg A."/>
            <person name="Gretarsdottir S."/>
            <person name="Ursing B."/>
            <person name="Janke A."/>
        </authorList>
    </citation>
    <scope>NUCLEOTIDE SEQUENCE [GENOMIC DNA]</scope>
</reference>
<geneLocation type="mitochondrion"/>
<evidence type="ECO:0000250" key="1">
    <source>
        <dbReference type="UniProtKB" id="P03928"/>
    </source>
</evidence>
<evidence type="ECO:0000250" key="2">
    <source>
        <dbReference type="UniProtKB" id="P03930"/>
    </source>
</evidence>
<evidence type="ECO:0000250" key="3">
    <source>
        <dbReference type="UniProtKB" id="P19483"/>
    </source>
</evidence>
<evidence type="ECO:0000255" key="4"/>
<evidence type="ECO:0000305" key="5"/>